<organism>
    <name type="scientific">Arabidopsis thaliana</name>
    <name type="common">Mouse-ear cress</name>
    <dbReference type="NCBI Taxonomy" id="3702"/>
    <lineage>
        <taxon>Eukaryota</taxon>
        <taxon>Viridiplantae</taxon>
        <taxon>Streptophyta</taxon>
        <taxon>Embryophyta</taxon>
        <taxon>Tracheophyta</taxon>
        <taxon>Spermatophyta</taxon>
        <taxon>Magnoliopsida</taxon>
        <taxon>eudicotyledons</taxon>
        <taxon>Gunneridae</taxon>
        <taxon>Pentapetalae</taxon>
        <taxon>rosids</taxon>
        <taxon>malvids</taxon>
        <taxon>Brassicales</taxon>
        <taxon>Brassicaceae</taxon>
        <taxon>Camelineae</taxon>
        <taxon>Arabidopsis</taxon>
    </lineage>
</organism>
<keyword id="KW-0963">Cytoplasm</keyword>
<keyword id="KW-0341">Growth regulation</keyword>
<keyword id="KW-1185">Reference proteome</keyword>
<dbReference type="EMBL" id="AC000104">
    <property type="protein sequence ID" value="AAB70429.1"/>
    <property type="status" value="ALT_SEQ"/>
    <property type="molecule type" value="Genomic_DNA"/>
</dbReference>
<dbReference type="EMBL" id="CP002684">
    <property type="protein sequence ID" value="AEE27700.1"/>
    <property type="molecule type" value="Genomic_DNA"/>
</dbReference>
<dbReference type="PIR" id="G86176">
    <property type="entry name" value="G86176"/>
</dbReference>
<dbReference type="RefSeq" id="NP_171940.1">
    <property type="nucleotide sequence ID" value="NM_100325.4"/>
</dbReference>
<dbReference type="BioGRID" id="24748">
    <property type="interactions" value="1"/>
</dbReference>
<dbReference type="FunCoup" id="F4I5N6">
    <property type="interactions" value="5"/>
</dbReference>
<dbReference type="STRING" id="3702.F4I5N6"/>
<dbReference type="iPTMnet" id="F4I5N6"/>
<dbReference type="PaxDb" id="3702-AT1G04450.1"/>
<dbReference type="ProteomicsDB" id="236253"/>
<dbReference type="EnsemblPlants" id="AT1G04450.1">
    <property type="protein sequence ID" value="AT1G04450.1"/>
    <property type="gene ID" value="AT1G04450"/>
</dbReference>
<dbReference type="GeneID" id="839513"/>
<dbReference type="Gramene" id="AT1G04450.1">
    <property type="protein sequence ID" value="AT1G04450.1"/>
    <property type="gene ID" value="AT1G04450"/>
</dbReference>
<dbReference type="KEGG" id="ath:AT1G04450"/>
<dbReference type="Araport" id="AT1G04450"/>
<dbReference type="TAIR" id="AT1G04450">
    <property type="gene designation" value="RIC3"/>
</dbReference>
<dbReference type="eggNOG" id="ENOG502SSMW">
    <property type="taxonomic scope" value="Eukaryota"/>
</dbReference>
<dbReference type="HOGENOM" id="CLU_086489_0_1_1"/>
<dbReference type="InParanoid" id="F4I5N6"/>
<dbReference type="OMA" id="ASDMQPK"/>
<dbReference type="OrthoDB" id="4206278at2759"/>
<dbReference type="PRO" id="PR:F4I5N6"/>
<dbReference type="Proteomes" id="UP000006548">
    <property type="component" value="Chromosome 1"/>
</dbReference>
<dbReference type="ExpressionAtlas" id="F4I5N6">
    <property type="expression patterns" value="baseline and differential"/>
</dbReference>
<dbReference type="GO" id="GO:0005737">
    <property type="term" value="C:cytoplasm"/>
    <property type="evidence" value="ECO:0000314"/>
    <property type="project" value="TAIR"/>
</dbReference>
<dbReference type="GO" id="GO:0051650">
    <property type="term" value="P:establishment of vesicle localization"/>
    <property type="evidence" value="ECO:0000314"/>
    <property type="project" value="TAIR"/>
</dbReference>
<dbReference type="GO" id="GO:0009860">
    <property type="term" value="P:pollen tube growth"/>
    <property type="evidence" value="ECO:0000315"/>
    <property type="project" value="TAIR"/>
</dbReference>
<dbReference type="GO" id="GO:0050850">
    <property type="term" value="P:positive regulation of calcium-mediated signaling"/>
    <property type="evidence" value="ECO:0000315"/>
    <property type="project" value="TAIR"/>
</dbReference>
<dbReference type="GO" id="GO:0007204">
    <property type="term" value="P:positive regulation of cytosolic calcium ion concentration"/>
    <property type="evidence" value="ECO:0000315"/>
    <property type="project" value="TAIR"/>
</dbReference>
<dbReference type="GO" id="GO:0030834">
    <property type="term" value="P:regulation of actin filament depolymerization"/>
    <property type="evidence" value="ECO:0000315"/>
    <property type="project" value="TAIR"/>
</dbReference>
<dbReference type="GO" id="GO:0050848">
    <property type="term" value="P:regulation of calcium-mediated signaling"/>
    <property type="evidence" value="ECO:0000315"/>
    <property type="project" value="TAIR"/>
</dbReference>
<dbReference type="GO" id="GO:0017157">
    <property type="term" value="P:regulation of exocytosis"/>
    <property type="evidence" value="ECO:0000314"/>
    <property type="project" value="TAIR"/>
</dbReference>
<dbReference type="CDD" id="cd00132">
    <property type="entry name" value="CRIB"/>
    <property type="match status" value="1"/>
</dbReference>
<dbReference type="InterPro" id="IPR000095">
    <property type="entry name" value="CRIB_dom"/>
</dbReference>
<dbReference type="PANTHER" id="PTHR46325:SF6">
    <property type="entry name" value="CRIB DOMAIN-CONTAINING PROTEIN RIC3"/>
    <property type="match status" value="1"/>
</dbReference>
<dbReference type="PANTHER" id="PTHR46325">
    <property type="entry name" value="CRIB DOMAIN-CONTAINING PROTEIN RIC8"/>
    <property type="match status" value="1"/>
</dbReference>
<dbReference type="PROSITE" id="PS50108">
    <property type="entry name" value="CRIB"/>
    <property type="match status" value="1"/>
</dbReference>
<feature type="chain" id="PRO_0000422726" description="CRIB domain-containing protein RIC3">
    <location>
        <begin position="1"/>
        <end position="220"/>
    </location>
</feature>
<feature type="domain" description="CRIB" evidence="1">
    <location>
        <begin position="28"/>
        <end position="41"/>
    </location>
</feature>
<feature type="region of interest" description="Disordered" evidence="2">
    <location>
        <begin position="39"/>
        <end position="220"/>
    </location>
</feature>
<feature type="compositionally biased region" description="Polar residues" evidence="2">
    <location>
        <begin position="61"/>
        <end position="77"/>
    </location>
</feature>
<feature type="compositionally biased region" description="Low complexity" evidence="2">
    <location>
        <begin position="108"/>
        <end position="121"/>
    </location>
</feature>
<feature type="compositionally biased region" description="Basic residues" evidence="2">
    <location>
        <begin position="127"/>
        <end position="136"/>
    </location>
</feature>
<feature type="compositionally biased region" description="Basic residues" evidence="2">
    <location>
        <begin position="172"/>
        <end position="184"/>
    </location>
</feature>
<feature type="compositionally biased region" description="Polar residues" evidence="2">
    <location>
        <begin position="209"/>
        <end position="220"/>
    </location>
</feature>
<feature type="mutagenesis site" description="Loss of interaction with ARAC11/ROP1; when associated with D39." evidence="4">
    <original>H</original>
    <variation>D</variation>
    <location>
        <position position="36"/>
    </location>
</feature>
<feature type="mutagenesis site" description="Loss of interaction with ARAC11/ROP1; when associated with D36." evidence="4">
    <original>H</original>
    <variation>D</variation>
    <location>
        <position position="39"/>
    </location>
</feature>
<reference key="1">
    <citation type="journal article" date="2000" name="Nature">
        <title>Sequence and analysis of chromosome 1 of the plant Arabidopsis thaliana.</title>
        <authorList>
            <person name="Theologis A."/>
            <person name="Ecker J.R."/>
            <person name="Palm C.J."/>
            <person name="Federspiel N.A."/>
            <person name="Kaul S."/>
            <person name="White O."/>
            <person name="Alonso J."/>
            <person name="Altafi H."/>
            <person name="Araujo R."/>
            <person name="Bowman C.L."/>
            <person name="Brooks S.Y."/>
            <person name="Buehler E."/>
            <person name="Chan A."/>
            <person name="Chao Q."/>
            <person name="Chen H."/>
            <person name="Cheuk R.F."/>
            <person name="Chin C.W."/>
            <person name="Chung M.K."/>
            <person name="Conn L."/>
            <person name="Conway A.B."/>
            <person name="Conway A.R."/>
            <person name="Creasy T.H."/>
            <person name="Dewar K."/>
            <person name="Dunn P."/>
            <person name="Etgu P."/>
            <person name="Feldblyum T.V."/>
            <person name="Feng J.-D."/>
            <person name="Fong B."/>
            <person name="Fujii C.Y."/>
            <person name="Gill J.E."/>
            <person name="Goldsmith A.D."/>
            <person name="Haas B."/>
            <person name="Hansen N.F."/>
            <person name="Hughes B."/>
            <person name="Huizar L."/>
            <person name="Hunter J.L."/>
            <person name="Jenkins J."/>
            <person name="Johnson-Hopson C."/>
            <person name="Khan S."/>
            <person name="Khaykin E."/>
            <person name="Kim C.J."/>
            <person name="Koo H.L."/>
            <person name="Kremenetskaia I."/>
            <person name="Kurtz D.B."/>
            <person name="Kwan A."/>
            <person name="Lam B."/>
            <person name="Langin-Hooper S."/>
            <person name="Lee A."/>
            <person name="Lee J.M."/>
            <person name="Lenz C.A."/>
            <person name="Li J.H."/>
            <person name="Li Y.-P."/>
            <person name="Lin X."/>
            <person name="Liu S.X."/>
            <person name="Liu Z.A."/>
            <person name="Luros J.S."/>
            <person name="Maiti R."/>
            <person name="Marziali A."/>
            <person name="Militscher J."/>
            <person name="Miranda M."/>
            <person name="Nguyen M."/>
            <person name="Nierman W.C."/>
            <person name="Osborne B.I."/>
            <person name="Pai G."/>
            <person name="Peterson J."/>
            <person name="Pham P.K."/>
            <person name="Rizzo M."/>
            <person name="Rooney T."/>
            <person name="Rowley D."/>
            <person name="Sakano H."/>
            <person name="Salzberg S.L."/>
            <person name="Schwartz J.R."/>
            <person name="Shinn P."/>
            <person name="Southwick A.M."/>
            <person name="Sun H."/>
            <person name="Tallon L.J."/>
            <person name="Tambunga G."/>
            <person name="Toriumi M.J."/>
            <person name="Town C.D."/>
            <person name="Utterback T."/>
            <person name="Van Aken S."/>
            <person name="Vaysberg M."/>
            <person name="Vysotskaia V.S."/>
            <person name="Walker M."/>
            <person name="Wu D."/>
            <person name="Yu G."/>
            <person name="Fraser C.M."/>
            <person name="Venter J.C."/>
            <person name="Davis R.W."/>
        </authorList>
    </citation>
    <scope>NUCLEOTIDE SEQUENCE [LARGE SCALE GENOMIC DNA]</scope>
    <source>
        <strain>cv. Columbia</strain>
    </source>
</reference>
<reference key="2">
    <citation type="journal article" date="2017" name="Plant J.">
        <title>Araport11: a complete reannotation of the Arabidopsis thaliana reference genome.</title>
        <authorList>
            <person name="Cheng C.Y."/>
            <person name="Krishnakumar V."/>
            <person name="Chan A.P."/>
            <person name="Thibaud-Nissen F."/>
            <person name="Schobel S."/>
            <person name="Town C.D."/>
        </authorList>
    </citation>
    <scope>GENOME REANNOTATION</scope>
    <source>
        <strain>cv. Columbia</strain>
    </source>
</reference>
<reference key="3">
    <citation type="journal article" date="2001" name="Plant Cell">
        <title>A genome-wide analysis of Arabidopsis Rop-interactive CRIB motif-containing proteins that act as Rop GTPase targets.</title>
        <authorList>
            <person name="Wu G."/>
            <person name="Gu Y."/>
            <person name="Li S."/>
            <person name="Yang Z."/>
        </authorList>
    </citation>
    <scope>FUNCTION</scope>
    <scope>SUBCELLULAR LOCATION</scope>
    <scope>TISSUE SPECIFICITY</scope>
    <scope>GENE FAMILY</scope>
    <scope>NOMENCLATURE</scope>
</reference>
<reference key="4">
    <citation type="journal article" date="2005" name="J. Cell Biol.">
        <title>A Rho family GTPase controls actin dynamics and tip growth via two counteracting downstream pathways in pollen tubes.</title>
        <authorList>
            <person name="Gu Y."/>
            <person name="Fu Y."/>
            <person name="Dowd P."/>
            <person name="Li S."/>
            <person name="Vernoud V."/>
            <person name="Gilroy S."/>
            <person name="Yang Z."/>
        </authorList>
    </citation>
    <scope>FUNCTION</scope>
    <scope>INTERACTION WITH ARAC11/ROP1</scope>
    <scope>SUBCELLULAR LOCATION</scope>
    <scope>MUTAGENESIS OF HIS-36 AND HIS-39</scope>
</reference>
<reference key="5">
    <citation type="journal article" date="2008" name="J. Cell Biol.">
        <title>Rho-GTPase-dependent filamentous actin dynamics coordinate vesicle targeting and exocytosis during tip growth.</title>
        <authorList>
            <person name="Lee Y.J."/>
            <person name="Szumlanski A."/>
            <person name="Nielsen E."/>
            <person name="Yang Z."/>
        </authorList>
    </citation>
    <scope>FUNCTION</scope>
</reference>
<sequence length="220" mass="24256">MATVKGLLKGLRYITQIFDEEKDKDMQIGFPTDVKHVAHIGSDGPATNVPSWMGDFKPQENENGQVVSRADANNNQIGEGVGLQELLPPTDKPKHKKTRRKSETVSQNGSPPRRNSSASASDMQPKNTRRHHRSRHGSIDSSNDPSVRRRRVVSVTTNDMEGSYPLSDSSTHSRKSTSRHRKPKGSGGGELSMKKTKGKTENPIVESVDTCNDNNISDKE</sequence>
<gene>
    <name type="primary">RIC3</name>
    <name type="ordered locus">At1g04450</name>
    <name type="ORF">F19P19.8</name>
</gene>
<name>RIC3_ARATH</name>
<evidence type="ECO:0000255" key="1">
    <source>
        <dbReference type="PROSITE-ProRule" id="PRU00057"/>
    </source>
</evidence>
<evidence type="ECO:0000256" key="2">
    <source>
        <dbReference type="SAM" id="MobiDB-lite"/>
    </source>
</evidence>
<evidence type="ECO:0000269" key="3">
    <source>
    </source>
</evidence>
<evidence type="ECO:0000269" key="4">
    <source>
    </source>
</evidence>
<evidence type="ECO:0000269" key="5">
    <source>
    </source>
</evidence>
<evidence type="ECO:0000305" key="6"/>
<evidence type="ECO:0000305" key="7">
    <source>
    </source>
</evidence>
<comment type="function">
    <text evidence="3 4 5">Functions as a downstream effector of Rho-related GTP binding proteins of the 'Rho of Plants' (ROPs) family. Participates in the propagation of ROP GTPase signals in specific cellular responses. Functions as a downstream effector of ARAC11/ROP1 to activate calcium signaling that leads to F-actin disassembly associated with exocytosis in the tip of the growing pollen tube. Counteracts the ARAC11/ROP1-RIC4 pathway, which promotes apical F-actin assembly associated with vesicle accumulation, to control actin dynamics and pollen tube apical growth.</text>
</comment>
<comment type="subunit">
    <text evidence="4">Interacts with ARAC11/ROP1.</text>
</comment>
<comment type="subcellular location">
    <subcellularLocation>
        <location evidence="3 4">Cytoplasm</location>
    </subcellularLocation>
</comment>
<comment type="tissue specificity">
    <text evidence="3">Expressed in flowers and pollen.</text>
</comment>
<comment type="miscellaneous">
    <text evidence="7">Over-expression of RIC3 in tobacco germinating pollen induces depolarized pollen tube growth.</text>
</comment>
<comment type="sequence caution" evidence="6">
    <conflict type="erroneous gene model prediction">
        <sequence resource="EMBL-CDS" id="AAB70429"/>
    </conflict>
</comment>
<protein>
    <recommendedName>
        <fullName>CRIB domain-containing protein RIC3</fullName>
    </recommendedName>
    <alternativeName>
        <fullName>ROP-interactive CRIB motif-containing protein 3</fullName>
    </alternativeName>
    <alternativeName>
        <fullName>Target of ROP protein RIC3</fullName>
    </alternativeName>
</protein>
<accession>F4I5N6</accession>
<accession>P93814</accession>
<proteinExistence type="evidence at protein level"/>